<feature type="chain" id="PRO_1000212117" description="Co-chaperonin GroES">
    <location>
        <begin position="1"/>
        <end position="94"/>
    </location>
</feature>
<accession>C5D4F3</accession>
<evidence type="ECO:0000255" key="1">
    <source>
        <dbReference type="HAMAP-Rule" id="MF_00580"/>
    </source>
</evidence>
<name>CH10_GEOSW</name>
<sequence>MLKPLGDRVVIEVIETEEKTASGIVLPDTAKEKPQEGRVVAVGKGRVLDSGECVAPEVEVGDRIIFSKYAGTEVKYDGKEYLILRESDILAVIG</sequence>
<keyword id="KW-0143">Chaperone</keyword>
<keyword id="KW-0963">Cytoplasm</keyword>
<reference key="1">
    <citation type="submission" date="2009-06" db="EMBL/GenBank/DDBJ databases">
        <title>Complete sequence of chromosome of Geopacillus sp. WCH70.</title>
        <authorList>
            <consortium name="US DOE Joint Genome Institute"/>
            <person name="Lucas S."/>
            <person name="Copeland A."/>
            <person name="Lapidus A."/>
            <person name="Glavina del Rio T."/>
            <person name="Dalin E."/>
            <person name="Tice H."/>
            <person name="Bruce D."/>
            <person name="Goodwin L."/>
            <person name="Pitluck S."/>
            <person name="Chertkov O."/>
            <person name="Brettin T."/>
            <person name="Detter J.C."/>
            <person name="Han C."/>
            <person name="Larimer F."/>
            <person name="Land M."/>
            <person name="Hauser L."/>
            <person name="Kyrpides N."/>
            <person name="Mikhailova N."/>
            <person name="Brumm P."/>
            <person name="Mead D.A."/>
            <person name="Richardson P."/>
        </authorList>
    </citation>
    <scope>NUCLEOTIDE SEQUENCE [LARGE SCALE GENOMIC DNA]</scope>
    <source>
        <strain>WCH70</strain>
    </source>
</reference>
<dbReference type="EMBL" id="CP001638">
    <property type="protein sequence ID" value="ACS23161.1"/>
    <property type="molecule type" value="Genomic_DNA"/>
</dbReference>
<dbReference type="SMR" id="C5D4F3"/>
<dbReference type="STRING" id="471223.GWCH70_0230"/>
<dbReference type="KEGG" id="gwc:GWCH70_0230"/>
<dbReference type="eggNOG" id="COG0234">
    <property type="taxonomic scope" value="Bacteria"/>
</dbReference>
<dbReference type="HOGENOM" id="CLU_132825_2_0_9"/>
<dbReference type="OrthoDB" id="9806791at2"/>
<dbReference type="GO" id="GO:0005737">
    <property type="term" value="C:cytoplasm"/>
    <property type="evidence" value="ECO:0007669"/>
    <property type="project" value="UniProtKB-SubCell"/>
</dbReference>
<dbReference type="GO" id="GO:0005524">
    <property type="term" value="F:ATP binding"/>
    <property type="evidence" value="ECO:0007669"/>
    <property type="project" value="InterPro"/>
</dbReference>
<dbReference type="GO" id="GO:0046872">
    <property type="term" value="F:metal ion binding"/>
    <property type="evidence" value="ECO:0007669"/>
    <property type="project" value="TreeGrafter"/>
</dbReference>
<dbReference type="GO" id="GO:0044183">
    <property type="term" value="F:protein folding chaperone"/>
    <property type="evidence" value="ECO:0007669"/>
    <property type="project" value="InterPro"/>
</dbReference>
<dbReference type="GO" id="GO:0051087">
    <property type="term" value="F:protein-folding chaperone binding"/>
    <property type="evidence" value="ECO:0007669"/>
    <property type="project" value="TreeGrafter"/>
</dbReference>
<dbReference type="GO" id="GO:0051082">
    <property type="term" value="F:unfolded protein binding"/>
    <property type="evidence" value="ECO:0007669"/>
    <property type="project" value="TreeGrafter"/>
</dbReference>
<dbReference type="GO" id="GO:0051085">
    <property type="term" value="P:chaperone cofactor-dependent protein refolding"/>
    <property type="evidence" value="ECO:0007669"/>
    <property type="project" value="TreeGrafter"/>
</dbReference>
<dbReference type="CDD" id="cd00320">
    <property type="entry name" value="cpn10"/>
    <property type="match status" value="1"/>
</dbReference>
<dbReference type="FunFam" id="2.30.33.40:FF:000001">
    <property type="entry name" value="10 kDa chaperonin"/>
    <property type="match status" value="1"/>
</dbReference>
<dbReference type="Gene3D" id="2.30.33.40">
    <property type="entry name" value="GroES chaperonin"/>
    <property type="match status" value="1"/>
</dbReference>
<dbReference type="HAMAP" id="MF_00580">
    <property type="entry name" value="CH10"/>
    <property type="match status" value="1"/>
</dbReference>
<dbReference type="InterPro" id="IPR020818">
    <property type="entry name" value="Chaperonin_GroES"/>
</dbReference>
<dbReference type="InterPro" id="IPR037124">
    <property type="entry name" value="Chaperonin_GroES_sf"/>
</dbReference>
<dbReference type="InterPro" id="IPR018369">
    <property type="entry name" value="Chaprnonin_Cpn10_CS"/>
</dbReference>
<dbReference type="InterPro" id="IPR011032">
    <property type="entry name" value="GroES-like_sf"/>
</dbReference>
<dbReference type="NCBIfam" id="NF001527">
    <property type="entry name" value="PRK00364.1-2"/>
    <property type="match status" value="1"/>
</dbReference>
<dbReference type="NCBIfam" id="NF001530">
    <property type="entry name" value="PRK00364.1-6"/>
    <property type="match status" value="1"/>
</dbReference>
<dbReference type="NCBIfam" id="NF001531">
    <property type="entry name" value="PRK00364.2-2"/>
    <property type="match status" value="1"/>
</dbReference>
<dbReference type="NCBIfam" id="NF001532">
    <property type="entry name" value="PRK00364.2-3"/>
    <property type="match status" value="1"/>
</dbReference>
<dbReference type="NCBIfam" id="NF001533">
    <property type="entry name" value="PRK00364.2-4"/>
    <property type="match status" value="1"/>
</dbReference>
<dbReference type="NCBIfam" id="NF001534">
    <property type="entry name" value="PRK00364.2-5"/>
    <property type="match status" value="1"/>
</dbReference>
<dbReference type="PANTHER" id="PTHR10772">
    <property type="entry name" value="10 KDA HEAT SHOCK PROTEIN"/>
    <property type="match status" value="1"/>
</dbReference>
<dbReference type="PANTHER" id="PTHR10772:SF58">
    <property type="entry name" value="CO-CHAPERONIN GROES"/>
    <property type="match status" value="1"/>
</dbReference>
<dbReference type="Pfam" id="PF00166">
    <property type="entry name" value="Cpn10"/>
    <property type="match status" value="1"/>
</dbReference>
<dbReference type="PRINTS" id="PR00297">
    <property type="entry name" value="CHAPERONIN10"/>
</dbReference>
<dbReference type="SMART" id="SM00883">
    <property type="entry name" value="Cpn10"/>
    <property type="match status" value="1"/>
</dbReference>
<dbReference type="SUPFAM" id="SSF50129">
    <property type="entry name" value="GroES-like"/>
    <property type="match status" value="1"/>
</dbReference>
<dbReference type="PROSITE" id="PS00681">
    <property type="entry name" value="CHAPERONINS_CPN10"/>
    <property type="match status" value="1"/>
</dbReference>
<proteinExistence type="inferred from homology"/>
<protein>
    <recommendedName>
        <fullName evidence="1">Co-chaperonin GroES</fullName>
    </recommendedName>
    <alternativeName>
        <fullName evidence="1">10 kDa chaperonin</fullName>
    </alternativeName>
    <alternativeName>
        <fullName evidence="1">Chaperonin-10</fullName>
        <shortName evidence="1">Cpn10</shortName>
    </alternativeName>
</protein>
<gene>
    <name evidence="1" type="primary">groES</name>
    <name evidence="1" type="synonym">groS</name>
    <name type="ordered locus">GWCH70_0230</name>
</gene>
<organism>
    <name type="scientific">Geobacillus sp. (strain WCH70)</name>
    <dbReference type="NCBI Taxonomy" id="471223"/>
    <lineage>
        <taxon>Bacteria</taxon>
        <taxon>Bacillati</taxon>
        <taxon>Bacillota</taxon>
        <taxon>Bacilli</taxon>
        <taxon>Bacillales</taxon>
        <taxon>Anoxybacillaceae</taxon>
        <taxon>Geobacillus</taxon>
    </lineage>
</organism>
<comment type="function">
    <text evidence="1">Together with the chaperonin GroEL, plays an essential role in assisting protein folding. The GroEL-GroES system forms a nano-cage that allows encapsulation of the non-native substrate proteins and provides a physical environment optimized to promote and accelerate protein folding. GroES binds to the apical surface of the GroEL ring, thereby capping the opening of the GroEL channel.</text>
</comment>
<comment type="subunit">
    <text evidence="1">Heptamer of 7 subunits arranged in a ring. Interacts with the chaperonin GroEL.</text>
</comment>
<comment type="subcellular location">
    <subcellularLocation>
        <location evidence="1">Cytoplasm</location>
    </subcellularLocation>
</comment>
<comment type="similarity">
    <text evidence="1">Belongs to the GroES chaperonin family.</text>
</comment>